<dbReference type="EC" id="7.1.1.2"/>
<dbReference type="EMBL" id="AJ505830">
    <property type="protein sequence ID" value="CAD44377.1"/>
    <property type="molecule type" value="Genomic_DNA"/>
</dbReference>
<dbReference type="RefSeq" id="YP_220680.1">
    <property type="nucleotide sequence ID" value="NC_006924.1"/>
</dbReference>
<dbReference type="SMR" id="Q70Y30"/>
<dbReference type="GeneID" id="3338930"/>
<dbReference type="CTD" id="4535"/>
<dbReference type="OrthoDB" id="531329at2759"/>
<dbReference type="GO" id="GO:0005743">
    <property type="term" value="C:mitochondrial inner membrane"/>
    <property type="evidence" value="ECO:0007669"/>
    <property type="project" value="UniProtKB-SubCell"/>
</dbReference>
<dbReference type="GO" id="GO:0008137">
    <property type="term" value="F:NADH dehydrogenase (ubiquinone) activity"/>
    <property type="evidence" value="ECO:0007669"/>
    <property type="project" value="UniProtKB-EC"/>
</dbReference>
<dbReference type="GO" id="GO:0009060">
    <property type="term" value="P:aerobic respiration"/>
    <property type="evidence" value="ECO:0007669"/>
    <property type="project" value="TreeGrafter"/>
</dbReference>
<dbReference type="HAMAP" id="MF_01350">
    <property type="entry name" value="NDH1_NuoH"/>
    <property type="match status" value="1"/>
</dbReference>
<dbReference type="InterPro" id="IPR001694">
    <property type="entry name" value="NADH_UbQ_OxRdtase_su1/FPO"/>
</dbReference>
<dbReference type="InterPro" id="IPR018086">
    <property type="entry name" value="NADH_UbQ_OxRdtase_su1_CS"/>
</dbReference>
<dbReference type="PANTHER" id="PTHR11432">
    <property type="entry name" value="NADH DEHYDROGENASE SUBUNIT 1"/>
    <property type="match status" value="1"/>
</dbReference>
<dbReference type="PANTHER" id="PTHR11432:SF3">
    <property type="entry name" value="NADH-UBIQUINONE OXIDOREDUCTASE CHAIN 1"/>
    <property type="match status" value="1"/>
</dbReference>
<dbReference type="Pfam" id="PF00146">
    <property type="entry name" value="NADHdh"/>
    <property type="match status" value="1"/>
</dbReference>
<dbReference type="PROSITE" id="PS00667">
    <property type="entry name" value="COMPLEX1_ND1_1"/>
    <property type="match status" value="1"/>
</dbReference>
<dbReference type="PROSITE" id="PS00668">
    <property type="entry name" value="COMPLEX1_ND1_2"/>
    <property type="match status" value="1"/>
</dbReference>
<sequence length="318" mass="35584">MLTTNILCLIIPILLAVAFLTLVERKILGYMQFRKGPNIVGPYGLLQPAADATKLFTKEPLHPLTSSKFMFTIAPTLALTLALTLWIPLPMPYPLIDLNLGILFILAVSSLAVYSILWSGWASNSKYALIGALRAVAQTISYEVTLAIILLSLVLTNGSFTLSTLTTTQEHMWLVLPTWPLTMMWFTSTLAETNRAPFDLSEGESELVSGFNVEYAAGPFALFFMAEYANIILMNSLTTALFFGAFHNPSLPELHTINFITKTLILTTMFLWIRASYPRFRYDQLMHLLWKNFLPLTLAMCMWHVSTSISFASIPPQT</sequence>
<comment type="function">
    <text evidence="1">Core subunit of the mitochondrial membrane respiratory chain NADH dehydrogenase (Complex I) that is believed to belong to the minimal assembly required for catalysis. Complex I functions in the transfer of electrons from NADH to the respiratory chain. The immediate electron acceptor for the enzyme is believed to be ubiquinone (By similarity).</text>
</comment>
<comment type="catalytic activity">
    <reaction>
        <text>a ubiquinone + NADH + 5 H(+)(in) = a ubiquinol + NAD(+) + 4 H(+)(out)</text>
        <dbReference type="Rhea" id="RHEA:29091"/>
        <dbReference type="Rhea" id="RHEA-COMP:9565"/>
        <dbReference type="Rhea" id="RHEA-COMP:9566"/>
        <dbReference type="ChEBI" id="CHEBI:15378"/>
        <dbReference type="ChEBI" id="CHEBI:16389"/>
        <dbReference type="ChEBI" id="CHEBI:17976"/>
        <dbReference type="ChEBI" id="CHEBI:57540"/>
        <dbReference type="ChEBI" id="CHEBI:57945"/>
        <dbReference type="EC" id="7.1.1.2"/>
    </reaction>
</comment>
<comment type="subcellular location">
    <subcellularLocation>
        <location evidence="1">Mitochondrion inner membrane</location>
        <topology evidence="1">Multi-pass membrane protein</topology>
    </subcellularLocation>
</comment>
<comment type="similarity">
    <text evidence="3">Belongs to the complex I subunit 1 family.</text>
</comment>
<name>NU1M_CHODI</name>
<organism>
    <name type="scientific">Choloepus didactylus</name>
    <name type="common">Southern two-toed sloth</name>
    <name type="synonym">Bradypus didactylus</name>
    <dbReference type="NCBI Taxonomy" id="27675"/>
    <lineage>
        <taxon>Eukaryota</taxon>
        <taxon>Metazoa</taxon>
        <taxon>Chordata</taxon>
        <taxon>Craniata</taxon>
        <taxon>Vertebrata</taxon>
        <taxon>Euteleostomi</taxon>
        <taxon>Mammalia</taxon>
        <taxon>Eutheria</taxon>
        <taxon>Xenarthra</taxon>
        <taxon>Pilosa</taxon>
        <taxon>Folivora</taxon>
        <taxon>Megalonychidae</taxon>
        <taxon>Choloepus</taxon>
    </lineage>
</organism>
<reference key="1">
    <citation type="journal article" date="2003" name="Mol. Phylogenet. Evol.">
        <title>Molecular systematics of armadillos (Xenarthra, Dasypodidae): contribution of maximum likelihood and Bayesian analyses of mitochondrial and nuclear genes.</title>
        <authorList>
            <person name="Delsuc F."/>
            <person name="Stanhope M.J."/>
            <person name="Douzery E.J."/>
        </authorList>
    </citation>
    <scope>NUCLEOTIDE SEQUENCE [GENOMIC DNA]</scope>
</reference>
<gene>
    <name type="primary">MT-ND1</name>
    <name type="synonym">MTND1</name>
    <name type="synonym">NADH1</name>
    <name type="synonym">ND1</name>
</gene>
<geneLocation type="mitochondrion"/>
<proteinExistence type="inferred from homology"/>
<evidence type="ECO:0000250" key="1"/>
<evidence type="ECO:0000255" key="2"/>
<evidence type="ECO:0000305" key="3"/>
<keyword id="KW-0249">Electron transport</keyword>
<keyword id="KW-0472">Membrane</keyword>
<keyword id="KW-0496">Mitochondrion</keyword>
<keyword id="KW-0999">Mitochondrion inner membrane</keyword>
<keyword id="KW-0520">NAD</keyword>
<keyword id="KW-0679">Respiratory chain</keyword>
<keyword id="KW-1278">Translocase</keyword>
<keyword id="KW-0812">Transmembrane</keyword>
<keyword id="KW-1133">Transmembrane helix</keyword>
<keyword id="KW-0813">Transport</keyword>
<keyword id="KW-0830">Ubiquinone</keyword>
<accession>Q70Y30</accession>
<feature type="chain" id="PRO_0000117369" description="NADH-ubiquinone oxidoreductase chain 1">
    <location>
        <begin position="1"/>
        <end position="318"/>
    </location>
</feature>
<feature type="transmembrane region" description="Helical" evidence="2">
    <location>
        <begin position="3"/>
        <end position="23"/>
    </location>
</feature>
<feature type="transmembrane region" description="Helical" evidence="2">
    <location>
        <begin position="69"/>
        <end position="89"/>
    </location>
</feature>
<feature type="transmembrane region" description="Helical" evidence="2">
    <location>
        <begin position="100"/>
        <end position="120"/>
    </location>
</feature>
<feature type="transmembrane region" description="Helical" evidence="2">
    <location>
        <begin position="135"/>
        <end position="155"/>
    </location>
</feature>
<feature type="transmembrane region" description="Helical" evidence="2">
    <location>
        <begin position="171"/>
        <end position="191"/>
    </location>
</feature>
<feature type="transmembrane region" description="Helical" evidence="2">
    <location>
        <begin position="213"/>
        <end position="233"/>
    </location>
</feature>
<feature type="transmembrane region" description="Helical" evidence="2">
    <location>
        <begin position="253"/>
        <end position="273"/>
    </location>
</feature>
<feature type="transmembrane region" description="Helical" evidence="2">
    <location>
        <begin position="294"/>
        <end position="314"/>
    </location>
</feature>
<protein>
    <recommendedName>
        <fullName>NADH-ubiquinone oxidoreductase chain 1</fullName>
        <ecNumber>7.1.1.2</ecNumber>
    </recommendedName>
    <alternativeName>
        <fullName>NADH dehydrogenase subunit 1</fullName>
    </alternativeName>
</protein>